<protein>
    <recommendedName>
        <fullName evidence="1">Photosystem I assembly protein Ycf4</fullName>
    </recommendedName>
</protein>
<dbReference type="EMBL" id="EU189133">
    <property type="protein sequence ID" value="ABW20569.1"/>
    <property type="molecule type" value="Genomic_DNA"/>
</dbReference>
<dbReference type="RefSeq" id="YP_001531224.1">
    <property type="nucleotide sequence ID" value="NC_009949.1"/>
</dbReference>
<dbReference type="GeneID" id="5714841"/>
<dbReference type="GO" id="GO:0009522">
    <property type="term" value="C:photosystem I"/>
    <property type="evidence" value="ECO:0007669"/>
    <property type="project" value="InterPro"/>
</dbReference>
<dbReference type="GO" id="GO:0055035">
    <property type="term" value="C:plastid thylakoid membrane"/>
    <property type="evidence" value="ECO:0007669"/>
    <property type="project" value="UniProtKB-SubCell"/>
</dbReference>
<dbReference type="GO" id="GO:0015979">
    <property type="term" value="P:photosynthesis"/>
    <property type="evidence" value="ECO:0007669"/>
    <property type="project" value="UniProtKB-UniRule"/>
</dbReference>
<dbReference type="HAMAP" id="MF_00437">
    <property type="entry name" value="Ycf4"/>
    <property type="match status" value="1"/>
</dbReference>
<dbReference type="InterPro" id="IPR003359">
    <property type="entry name" value="PSI_Ycf4_assembly"/>
</dbReference>
<dbReference type="PANTHER" id="PTHR33288">
    <property type="match status" value="1"/>
</dbReference>
<dbReference type="PANTHER" id="PTHR33288:SF4">
    <property type="entry name" value="PHOTOSYSTEM I ASSEMBLY PROTEIN YCF4"/>
    <property type="match status" value="1"/>
</dbReference>
<dbReference type="Pfam" id="PF02392">
    <property type="entry name" value="Ycf4"/>
    <property type="match status" value="1"/>
</dbReference>
<organism>
    <name type="scientific">Cuscuta obtusiflora</name>
    <name type="common">Peruvian dodder</name>
    <dbReference type="NCBI Taxonomy" id="437280"/>
    <lineage>
        <taxon>Eukaryota</taxon>
        <taxon>Viridiplantae</taxon>
        <taxon>Streptophyta</taxon>
        <taxon>Embryophyta</taxon>
        <taxon>Tracheophyta</taxon>
        <taxon>Spermatophyta</taxon>
        <taxon>Magnoliopsida</taxon>
        <taxon>eudicotyledons</taxon>
        <taxon>Gunneridae</taxon>
        <taxon>Pentapetalae</taxon>
        <taxon>asterids</taxon>
        <taxon>lamiids</taxon>
        <taxon>Solanales</taxon>
        <taxon>Convolvulaceae</taxon>
        <taxon>Cuscuteae</taxon>
        <taxon>Cuscuta</taxon>
        <taxon>Cuscuta subgen. Grammica</taxon>
        <taxon>Cuscuta sect. Cleistogrammica</taxon>
    </lineage>
</organism>
<keyword id="KW-0472">Membrane</keyword>
<keyword id="KW-0602">Photosynthesis</keyword>
<keyword id="KW-0934">Plastid</keyword>
<keyword id="KW-0793">Thylakoid</keyword>
<keyword id="KW-0812">Transmembrane</keyword>
<keyword id="KW-1133">Transmembrane helix</keyword>
<sequence length="176" mass="20670">MSWRSEQIWIELIPGSRRESNFLWAFILFFGSLEFILVGTASYLRQNLIAFFPQGMVMTFYGISGLFISLYLLSMLFWNVGGGYHQFDKTRGVICIFRWVFPGRNRRLLLRFFMKDIRSIRIEVKEGFYTRRVLYMDIRGQKGIPLTRTDEVLTPVEIEKKAAELASFLCVPIEVL</sequence>
<comment type="function">
    <text evidence="1">Seems to be required for the assembly of the photosystem I complex.</text>
</comment>
<comment type="subcellular location">
    <subcellularLocation>
        <location evidence="2">Plastid thylakoid membrane</location>
        <topology evidence="1">Multi-pass membrane protein</topology>
    </subcellularLocation>
</comment>
<comment type="similarity">
    <text evidence="1">Belongs to the Ycf4 family.</text>
</comment>
<comment type="caution">
    <text evidence="2">Only inflorescences, fruits, starved seedlings and stressed stem tips are green in this organism.</text>
</comment>
<feature type="chain" id="PRO_0000326005" description="Photosystem I assembly protein Ycf4">
    <location>
        <begin position="1"/>
        <end position="176"/>
    </location>
</feature>
<feature type="transmembrane region" description="Helical" evidence="1">
    <location>
        <begin position="22"/>
        <end position="42"/>
    </location>
</feature>
<feature type="transmembrane region" description="Helical" evidence="1">
    <location>
        <begin position="57"/>
        <end position="77"/>
    </location>
</feature>
<geneLocation type="plastid"/>
<gene>
    <name evidence="1" type="primary">ycf4</name>
</gene>
<reference key="1">
    <citation type="journal article" date="2007" name="BMC Plant Biol.">
        <title>Complete plastid genome sequences suggest strong selection for retention of photosynthetic genes in the parasitic plant genus Cuscuta.</title>
        <authorList>
            <person name="McNeal J.R."/>
            <person name="Kuehl J.V."/>
            <person name="Boore J.L."/>
            <person name="dePamphilis C.W."/>
        </authorList>
    </citation>
    <scope>NUCLEOTIDE SEQUENCE [LARGE SCALE GENOMIC DNA]</scope>
</reference>
<proteinExistence type="inferred from homology"/>
<name>YCF4_CUSOB</name>
<evidence type="ECO:0000255" key="1">
    <source>
        <dbReference type="HAMAP-Rule" id="MF_00437"/>
    </source>
</evidence>
<evidence type="ECO:0000305" key="2"/>
<accession>A8W3J4</accession>